<comment type="function">
    <text evidence="1">Involved in the targeting and/or fusion of transport vesicles to their target membrane.</text>
</comment>
<comment type="subunit">
    <text evidence="1">Interacts with VAPA and VAPB.</text>
</comment>
<comment type="subcellular location">
    <molecule>Isoform 1</molecule>
    <subcellularLocation>
        <location evidence="1">Cytoplasmic vesicle</location>
        <location evidence="1">Secretory vesicle</location>
        <location evidence="1">Synaptic vesicle membrane</location>
        <topology evidence="1">Single-pass type IV membrane protein</topology>
    </subcellularLocation>
    <subcellularLocation>
        <location>Synapse</location>
        <location>Synaptosome</location>
    </subcellularLocation>
</comment>
<comment type="subcellular location">
    <molecule>Isoform 2</molecule>
    <subcellularLocation>
        <location evidence="1">Cytoplasmic vesicle membrane</location>
        <topology evidence="1">Single-pass type IV membrane protein</topology>
    </subcellularLocation>
    <subcellularLocation>
        <location>Synapse</location>
        <location>Synaptosome</location>
    </subcellularLocation>
</comment>
<comment type="alternative products">
    <event type="alternative splicing"/>
    <isoform>
        <id>Q0V7N0-1</id>
        <name>1</name>
        <sequence type="displayed"/>
    </isoform>
    <isoform>
        <id>Q0V7N0-2</id>
        <name>2</name>
        <sequence type="described" ref="VSP_029184"/>
    </isoform>
</comment>
<comment type="similarity">
    <text evidence="7">Belongs to the synaptobrevin family.</text>
</comment>
<feature type="chain" id="PRO_0000273714" description="Vesicle-associated membrane protein 1">
    <location>
        <begin position="1"/>
        <end position="118"/>
    </location>
</feature>
<feature type="topological domain" description="Cytoplasmic" evidence="3">
    <location>
        <begin position="1"/>
        <end position="96"/>
    </location>
</feature>
<feature type="transmembrane region" description="Helical; Anchor for type IV membrane protein" evidence="3">
    <location>
        <begin position="97"/>
        <end position="116"/>
    </location>
</feature>
<feature type="topological domain" description="Vesicular" evidence="3">
    <location>
        <begin position="117"/>
        <end position="118"/>
    </location>
</feature>
<feature type="domain" description="v-SNARE coiled-coil homology" evidence="4">
    <location>
        <begin position="33"/>
        <end position="93"/>
    </location>
</feature>
<feature type="region of interest" description="Disordered" evidence="5">
    <location>
        <begin position="1"/>
        <end position="36"/>
    </location>
</feature>
<feature type="compositionally biased region" description="Low complexity" evidence="5">
    <location>
        <begin position="1"/>
        <end position="15"/>
    </location>
</feature>
<feature type="modified residue" description="Phosphoserine" evidence="2">
    <location>
        <position position="63"/>
    </location>
</feature>
<feature type="splice variant" id="VSP_029184" description="In isoform 2." evidence="6">
    <original>IYFFA</original>
    <variation>SKYR</variation>
    <location>
        <begin position="114"/>
        <end position="118"/>
    </location>
</feature>
<feature type="sequence conflict" description="In Ref. 1; ABH06327." evidence="7" ref="1">
    <original>K</original>
    <variation>E</variation>
    <location>
        <position position="54"/>
    </location>
</feature>
<evidence type="ECO:0000250" key="1"/>
<evidence type="ECO:0000250" key="2">
    <source>
        <dbReference type="UniProtKB" id="Q62442"/>
    </source>
</evidence>
<evidence type="ECO:0000255" key="3"/>
<evidence type="ECO:0000255" key="4">
    <source>
        <dbReference type="PROSITE-ProRule" id="PRU00290"/>
    </source>
</evidence>
<evidence type="ECO:0000256" key="5">
    <source>
        <dbReference type="SAM" id="MobiDB-lite"/>
    </source>
</evidence>
<evidence type="ECO:0000303" key="6">
    <source>
    </source>
</evidence>
<evidence type="ECO:0000305" key="7"/>
<reference key="1">
    <citation type="journal article" date="2005" name="BMC Genomics">
        <title>Characterization of 954 bovine full-CDS cDNA sequences.</title>
        <authorList>
            <person name="Harhay G.P."/>
            <person name="Sonstegard T.S."/>
            <person name="Keele J.W."/>
            <person name="Heaton M.P."/>
            <person name="Clawson M.L."/>
            <person name="Snelling W.M."/>
            <person name="Wiedmann R.T."/>
            <person name="Van Tassell C.P."/>
            <person name="Smith T.P.L."/>
        </authorList>
    </citation>
    <scope>NUCLEOTIDE SEQUENCE [LARGE SCALE MRNA] (ISOFORM 2)</scope>
</reference>
<reference key="2">
    <citation type="submission" date="2007-03" db="EMBL/GenBank/DDBJ databases">
        <authorList>
            <consortium name="NIH - Mammalian Gene Collection (MGC) project"/>
        </authorList>
    </citation>
    <scope>NUCLEOTIDE SEQUENCE [LARGE SCALE MRNA] (ISOFORM 1)</scope>
    <source>
        <strain>Hereford</strain>
        <tissue>Hippocampus</tissue>
    </source>
</reference>
<proteinExistence type="inferred from homology"/>
<protein>
    <recommendedName>
        <fullName>Vesicle-associated membrane protein 1</fullName>
        <shortName>VAMP-1</shortName>
    </recommendedName>
    <alternativeName>
        <fullName>Synaptobrevin-1</fullName>
    </alternativeName>
</protein>
<keyword id="KW-0025">Alternative splicing</keyword>
<keyword id="KW-0175">Coiled coil</keyword>
<keyword id="KW-0968">Cytoplasmic vesicle</keyword>
<keyword id="KW-0472">Membrane</keyword>
<keyword id="KW-0597">Phosphoprotein</keyword>
<keyword id="KW-1185">Reference proteome</keyword>
<keyword id="KW-0770">Synapse</keyword>
<keyword id="KW-0771">Synaptosome</keyword>
<keyword id="KW-0812">Transmembrane</keyword>
<keyword id="KW-1133">Transmembrane helix</keyword>
<accession>Q0V7N0</accession>
<accession>A4IFF1</accession>
<dbReference type="EMBL" id="BT026540">
    <property type="protein sequence ID" value="ABH06327.1"/>
    <property type="molecule type" value="mRNA"/>
</dbReference>
<dbReference type="EMBL" id="BC134553">
    <property type="protein sequence ID" value="AAI34554.1"/>
    <property type="molecule type" value="mRNA"/>
</dbReference>
<dbReference type="RefSeq" id="NP_001069098.2">
    <molecule id="Q0V7N0-1"/>
    <property type="nucleotide sequence ID" value="NM_001075630.2"/>
</dbReference>
<dbReference type="SMR" id="Q0V7N0"/>
<dbReference type="FunCoup" id="Q0V7N0">
    <property type="interactions" value="625"/>
</dbReference>
<dbReference type="STRING" id="9913.ENSBTAP00000062791"/>
<dbReference type="PaxDb" id="9913-ENSBTAP00000019599"/>
<dbReference type="GeneID" id="513621"/>
<dbReference type="KEGG" id="bta:513621"/>
<dbReference type="CTD" id="6843"/>
<dbReference type="VEuPathDB" id="HostDB:ENSBTAG00000014603"/>
<dbReference type="eggNOG" id="KOG0860">
    <property type="taxonomic scope" value="Eukaryota"/>
</dbReference>
<dbReference type="HOGENOM" id="CLU_064620_4_0_1"/>
<dbReference type="InParanoid" id="Q0V7N0"/>
<dbReference type="OMA" id="CKYNTMK"/>
<dbReference type="OrthoDB" id="10042941at2759"/>
<dbReference type="Proteomes" id="UP000009136">
    <property type="component" value="Chromosome 5"/>
</dbReference>
<dbReference type="Bgee" id="ENSBTAG00000014603">
    <property type="expression patterns" value="Expressed in midbrain and 104 other cell types or tissues"/>
</dbReference>
<dbReference type="GO" id="GO:0043005">
    <property type="term" value="C:neuron projection"/>
    <property type="evidence" value="ECO:0007669"/>
    <property type="project" value="UniProtKB-KW"/>
</dbReference>
<dbReference type="GO" id="GO:0005886">
    <property type="term" value="C:plasma membrane"/>
    <property type="evidence" value="ECO:0000318"/>
    <property type="project" value="GO_Central"/>
</dbReference>
<dbReference type="GO" id="GO:0031201">
    <property type="term" value="C:SNARE complex"/>
    <property type="evidence" value="ECO:0000318"/>
    <property type="project" value="GO_Central"/>
</dbReference>
<dbReference type="GO" id="GO:0030672">
    <property type="term" value="C:synaptic vesicle membrane"/>
    <property type="evidence" value="ECO:0007669"/>
    <property type="project" value="UniProtKB-SubCell"/>
</dbReference>
<dbReference type="GO" id="GO:0005484">
    <property type="term" value="F:SNAP receptor activity"/>
    <property type="evidence" value="ECO:0000318"/>
    <property type="project" value="GO_Central"/>
</dbReference>
<dbReference type="GO" id="GO:0019905">
    <property type="term" value="F:syntaxin binding"/>
    <property type="evidence" value="ECO:0000318"/>
    <property type="project" value="GO_Central"/>
</dbReference>
<dbReference type="GO" id="GO:0035493">
    <property type="term" value="P:SNARE complex assembly"/>
    <property type="evidence" value="ECO:0000318"/>
    <property type="project" value="GO_Central"/>
</dbReference>
<dbReference type="GO" id="GO:0006906">
    <property type="term" value="P:vesicle fusion"/>
    <property type="evidence" value="ECO:0000318"/>
    <property type="project" value="GO_Central"/>
</dbReference>
<dbReference type="CDD" id="cd15870">
    <property type="entry name" value="R-SNARE_VAMP2"/>
    <property type="match status" value="1"/>
</dbReference>
<dbReference type="FunFam" id="1.20.5.110:FF:000013">
    <property type="entry name" value="Vesicle-associated membrane protein 2"/>
    <property type="match status" value="1"/>
</dbReference>
<dbReference type="Gene3D" id="1.20.5.110">
    <property type="match status" value="1"/>
</dbReference>
<dbReference type="InterPro" id="IPR001388">
    <property type="entry name" value="Synaptobrevin-like"/>
</dbReference>
<dbReference type="InterPro" id="IPR016444">
    <property type="entry name" value="Synaptobrevin/VAMP"/>
</dbReference>
<dbReference type="InterPro" id="IPR042855">
    <property type="entry name" value="V_SNARE_CC"/>
</dbReference>
<dbReference type="PANTHER" id="PTHR45701">
    <property type="entry name" value="SYNAPTOBREVIN FAMILY MEMBER"/>
    <property type="match status" value="1"/>
</dbReference>
<dbReference type="Pfam" id="PF00957">
    <property type="entry name" value="Synaptobrevin"/>
    <property type="match status" value="1"/>
</dbReference>
<dbReference type="PIRSF" id="PIRSF005409">
    <property type="entry name" value="Synaptobrevin_euk"/>
    <property type="match status" value="1"/>
</dbReference>
<dbReference type="PRINTS" id="PR00219">
    <property type="entry name" value="SYNAPTOBREVN"/>
</dbReference>
<dbReference type="SUPFAM" id="SSF58038">
    <property type="entry name" value="SNARE fusion complex"/>
    <property type="match status" value="1"/>
</dbReference>
<dbReference type="PROSITE" id="PS00417">
    <property type="entry name" value="SYNAPTOBREVIN"/>
    <property type="match status" value="1"/>
</dbReference>
<dbReference type="PROSITE" id="PS50892">
    <property type="entry name" value="V_SNARE"/>
    <property type="match status" value="1"/>
</dbReference>
<name>VAMP1_BOVIN</name>
<gene>
    <name type="primary">VAMP1</name>
    <name type="synonym">SYB1</name>
</gene>
<sequence>MSAPAQPPTEGAEGAAPGGGPPGPPPNMTSNRRLQQTQAQVEEVVDIMRVNVDKVLERDQKLSELDDRADALQAGASQFESSAAKLKRKYWWKNCKMMIMLGAICAIIVVVIVIYFFA</sequence>
<organism>
    <name type="scientific">Bos taurus</name>
    <name type="common">Bovine</name>
    <dbReference type="NCBI Taxonomy" id="9913"/>
    <lineage>
        <taxon>Eukaryota</taxon>
        <taxon>Metazoa</taxon>
        <taxon>Chordata</taxon>
        <taxon>Craniata</taxon>
        <taxon>Vertebrata</taxon>
        <taxon>Euteleostomi</taxon>
        <taxon>Mammalia</taxon>
        <taxon>Eutheria</taxon>
        <taxon>Laurasiatheria</taxon>
        <taxon>Artiodactyla</taxon>
        <taxon>Ruminantia</taxon>
        <taxon>Pecora</taxon>
        <taxon>Bovidae</taxon>
        <taxon>Bovinae</taxon>
        <taxon>Bos</taxon>
    </lineage>
</organism>